<accession>P48247</accession>
<name>GSA_PSEAE</name>
<organism>
    <name type="scientific">Pseudomonas aeruginosa (strain ATCC 15692 / DSM 22644 / CIP 104116 / JCM 14847 / LMG 12228 / 1C / PRS 101 / PAO1)</name>
    <dbReference type="NCBI Taxonomy" id="208964"/>
    <lineage>
        <taxon>Bacteria</taxon>
        <taxon>Pseudomonadati</taxon>
        <taxon>Pseudomonadota</taxon>
        <taxon>Gammaproteobacteria</taxon>
        <taxon>Pseudomonadales</taxon>
        <taxon>Pseudomonadaceae</taxon>
        <taxon>Pseudomonas</taxon>
    </lineage>
</organism>
<dbReference type="EC" id="5.4.3.8"/>
<dbReference type="EMBL" id="X82072">
    <property type="protein sequence ID" value="CAA57575.1"/>
    <property type="molecule type" value="Genomic_DNA"/>
</dbReference>
<dbReference type="EMBL" id="AE004091">
    <property type="protein sequence ID" value="AAG07364.1"/>
    <property type="molecule type" value="Genomic_DNA"/>
</dbReference>
<dbReference type="PIR" id="G83149">
    <property type="entry name" value="G83149"/>
</dbReference>
<dbReference type="PIR" id="S57898">
    <property type="entry name" value="S57898"/>
</dbReference>
<dbReference type="RefSeq" id="NP_252666.1">
    <property type="nucleotide sequence ID" value="NC_002516.2"/>
</dbReference>
<dbReference type="RefSeq" id="WP_003093150.1">
    <property type="nucleotide sequence ID" value="NZ_QZGE01000001.1"/>
</dbReference>
<dbReference type="PDB" id="5I92">
    <property type="method" value="X-ray"/>
    <property type="resolution" value="1.75 A"/>
    <property type="chains" value="A/B/C/D/E/F=1-427"/>
</dbReference>
<dbReference type="PDBsum" id="5I92"/>
<dbReference type="SMR" id="P48247"/>
<dbReference type="FunCoup" id="P48247">
    <property type="interactions" value="707"/>
</dbReference>
<dbReference type="STRING" id="208964.PA3977"/>
<dbReference type="PaxDb" id="208964-PA3977"/>
<dbReference type="GeneID" id="880859"/>
<dbReference type="KEGG" id="pae:PA3977"/>
<dbReference type="PATRIC" id="fig|208964.12.peg.4169"/>
<dbReference type="PseudoCAP" id="PA3977"/>
<dbReference type="HOGENOM" id="CLU_016922_1_5_6"/>
<dbReference type="InParanoid" id="P48247"/>
<dbReference type="OrthoDB" id="9801052at2"/>
<dbReference type="PhylomeDB" id="P48247"/>
<dbReference type="BioCyc" id="PAER208964:G1FZ6-4051-MONOMER"/>
<dbReference type="UniPathway" id="UPA00251">
    <property type="reaction ID" value="UER00317"/>
</dbReference>
<dbReference type="Proteomes" id="UP000002438">
    <property type="component" value="Chromosome"/>
</dbReference>
<dbReference type="GO" id="GO:0005737">
    <property type="term" value="C:cytoplasm"/>
    <property type="evidence" value="ECO:0007669"/>
    <property type="project" value="UniProtKB-SubCell"/>
</dbReference>
<dbReference type="GO" id="GO:0042286">
    <property type="term" value="F:glutamate-1-semialdehyde 2,1-aminomutase activity"/>
    <property type="evidence" value="ECO:0007669"/>
    <property type="project" value="UniProtKB-UniRule"/>
</dbReference>
<dbReference type="GO" id="GO:0030170">
    <property type="term" value="F:pyridoxal phosphate binding"/>
    <property type="evidence" value="ECO:0007669"/>
    <property type="project" value="InterPro"/>
</dbReference>
<dbReference type="GO" id="GO:0008483">
    <property type="term" value="F:transaminase activity"/>
    <property type="evidence" value="ECO:0007669"/>
    <property type="project" value="InterPro"/>
</dbReference>
<dbReference type="GO" id="GO:0006782">
    <property type="term" value="P:protoporphyrinogen IX biosynthetic process"/>
    <property type="evidence" value="ECO:0007669"/>
    <property type="project" value="UniProtKB-UniRule"/>
</dbReference>
<dbReference type="CDD" id="cd00610">
    <property type="entry name" value="OAT_like"/>
    <property type="match status" value="1"/>
</dbReference>
<dbReference type="FunFam" id="3.40.640.10:FF:000021">
    <property type="entry name" value="Glutamate-1-semialdehyde 2,1-aminomutase"/>
    <property type="match status" value="1"/>
</dbReference>
<dbReference type="Gene3D" id="3.90.1150.10">
    <property type="entry name" value="Aspartate Aminotransferase, domain 1"/>
    <property type="match status" value="1"/>
</dbReference>
<dbReference type="Gene3D" id="3.40.640.10">
    <property type="entry name" value="Type I PLP-dependent aspartate aminotransferase-like (Major domain)"/>
    <property type="match status" value="1"/>
</dbReference>
<dbReference type="HAMAP" id="MF_00375">
    <property type="entry name" value="HemL_aminotrans_3"/>
    <property type="match status" value="1"/>
</dbReference>
<dbReference type="InterPro" id="IPR004639">
    <property type="entry name" value="4pyrrol_synth_GluAld_NH2Trfase"/>
</dbReference>
<dbReference type="InterPro" id="IPR005814">
    <property type="entry name" value="Aminotrans_3"/>
</dbReference>
<dbReference type="InterPro" id="IPR049704">
    <property type="entry name" value="Aminotrans_3_PPA_site"/>
</dbReference>
<dbReference type="InterPro" id="IPR015424">
    <property type="entry name" value="PyrdxlP-dep_Trfase"/>
</dbReference>
<dbReference type="InterPro" id="IPR015421">
    <property type="entry name" value="PyrdxlP-dep_Trfase_major"/>
</dbReference>
<dbReference type="InterPro" id="IPR015422">
    <property type="entry name" value="PyrdxlP-dep_Trfase_small"/>
</dbReference>
<dbReference type="NCBIfam" id="TIGR00713">
    <property type="entry name" value="hemL"/>
    <property type="match status" value="1"/>
</dbReference>
<dbReference type="NCBIfam" id="NF000818">
    <property type="entry name" value="PRK00062.1"/>
    <property type="match status" value="1"/>
</dbReference>
<dbReference type="PANTHER" id="PTHR43713">
    <property type="entry name" value="GLUTAMATE-1-SEMIALDEHYDE 2,1-AMINOMUTASE"/>
    <property type="match status" value="1"/>
</dbReference>
<dbReference type="PANTHER" id="PTHR43713:SF3">
    <property type="entry name" value="GLUTAMATE-1-SEMIALDEHYDE 2,1-AMINOMUTASE 1, CHLOROPLASTIC-RELATED"/>
    <property type="match status" value="1"/>
</dbReference>
<dbReference type="Pfam" id="PF00202">
    <property type="entry name" value="Aminotran_3"/>
    <property type="match status" value="1"/>
</dbReference>
<dbReference type="SUPFAM" id="SSF53383">
    <property type="entry name" value="PLP-dependent transferases"/>
    <property type="match status" value="1"/>
</dbReference>
<dbReference type="PROSITE" id="PS00600">
    <property type="entry name" value="AA_TRANSFER_CLASS_3"/>
    <property type="match status" value="1"/>
</dbReference>
<comment type="catalytic activity">
    <reaction>
        <text>(S)-4-amino-5-oxopentanoate = 5-aminolevulinate</text>
        <dbReference type="Rhea" id="RHEA:14265"/>
        <dbReference type="ChEBI" id="CHEBI:57501"/>
        <dbReference type="ChEBI" id="CHEBI:356416"/>
        <dbReference type="EC" id="5.4.3.8"/>
    </reaction>
</comment>
<comment type="cofactor">
    <cofactor evidence="1">
        <name>pyridoxal 5'-phosphate</name>
        <dbReference type="ChEBI" id="CHEBI:597326"/>
    </cofactor>
</comment>
<comment type="pathway">
    <text>Porphyrin-containing compound metabolism; protoporphyrin-IX biosynthesis; 5-aminolevulinate from L-glutamyl-tRNA(Glu): step 2/2.</text>
</comment>
<comment type="subunit">
    <text evidence="1">Homodimer.</text>
</comment>
<comment type="subcellular location">
    <subcellularLocation>
        <location evidence="2">Cytoplasm</location>
    </subcellularLocation>
</comment>
<comment type="similarity">
    <text evidence="2">Belongs to the class-III pyridoxal-phosphate-dependent aminotransferase family. HemL subfamily.</text>
</comment>
<sequence length="427" mass="45398">MSRSETLFNNAQKHIPGGVNSPVRAFKSVGGTPLFFKHAEGAYVLDEDDKRYVDYVGSWGPMILGHSHPDVLDAVRRQLDHGLSYGAPTALEVEMADLVCSMVPSMEMVRMVSSGTEATMSAIRLARGYTGRDSIIKFEGCYHGHSDSLLVKAGSGALTFGVPNSPGVPAAFAKHTLTLPFNDIEAVRKTLGEVGKEVACIIVEPVAGNMNCVPPAPGFLEGLREACDEHGVVLIFDEVMTGFRVALGGAQAYYGVTPDLSTFGKIIGGGMPVGAFGGKREIMQQISPLGPVYQAGTLSGNPLAMAAGLTTLRLISRPGFHDELTAYTTRMLDGLQQRADAAGIPFVTTQAGGMFGLYFSGADAIVTFEDVMASDVERFKRFFHLMLDGGVYLAPSAFEAGFTSIAHGDKELEITLNAAEKAFAALK</sequence>
<keyword id="KW-0002">3D-structure</keyword>
<keyword id="KW-0963">Cytoplasm</keyword>
<keyword id="KW-0413">Isomerase</keyword>
<keyword id="KW-0627">Porphyrin biosynthesis</keyword>
<keyword id="KW-0663">Pyridoxal phosphate</keyword>
<keyword id="KW-1185">Reference proteome</keyword>
<protein>
    <recommendedName>
        <fullName>Glutamate-1-semialdehyde 2,1-aminomutase</fullName>
        <shortName>GSA</shortName>
        <ecNumber>5.4.3.8</ecNumber>
    </recommendedName>
    <alternativeName>
        <fullName>Glutamate-1-semialdehyde aminotransferase</fullName>
        <shortName>GSA-AT</shortName>
    </alternativeName>
</protein>
<reference key="1">
    <citation type="journal article" date="1995" name="Mol. Gen. Genet.">
        <title>Cloning, mapping and characterization of the Pseudomonas aeruginosa hemL gene.</title>
        <authorList>
            <person name="Hungerer C."/>
            <person name="Troup B."/>
            <person name="Romling U."/>
            <person name="Jahn D."/>
        </authorList>
    </citation>
    <scope>NUCLEOTIDE SEQUENCE [GENOMIC DNA]</scope>
    <source>
        <strain>ATCC 15692 / DSM 22644 / CIP 104116 / JCM 14847 / LMG 12228 / 1C / PRS 101 / PAO1</strain>
    </source>
</reference>
<reference key="2">
    <citation type="journal article" date="2000" name="Nature">
        <title>Complete genome sequence of Pseudomonas aeruginosa PAO1, an opportunistic pathogen.</title>
        <authorList>
            <person name="Stover C.K."/>
            <person name="Pham X.-Q.T."/>
            <person name="Erwin A.L."/>
            <person name="Mizoguchi S.D."/>
            <person name="Warrener P."/>
            <person name="Hickey M.J."/>
            <person name="Brinkman F.S.L."/>
            <person name="Hufnagle W.O."/>
            <person name="Kowalik D.J."/>
            <person name="Lagrou M."/>
            <person name="Garber R.L."/>
            <person name="Goltry L."/>
            <person name="Tolentino E."/>
            <person name="Westbrock-Wadman S."/>
            <person name="Yuan Y."/>
            <person name="Brody L.L."/>
            <person name="Coulter S.N."/>
            <person name="Folger K.R."/>
            <person name="Kas A."/>
            <person name="Larbig K."/>
            <person name="Lim R.M."/>
            <person name="Smith K.A."/>
            <person name="Spencer D.H."/>
            <person name="Wong G.K.-S."/>
            <person name="Wu Z."/>
            <person name="Paulsen I.T."/>
            <person name="Reizer J."/>
            <person name="Saier M.H. Jr."/>
            <person name="Hancock R.E.W."/>
            <person name="Lory S."/>
            <person name="Olson M.V."/>
        </authorList>
    </citation>
    <scope>NUCLEOTIDE SEQUENCE [LARGE SCALE GENOMIC DNA]</scope>
    <source>
        <strain>ATCC 15692 / DSM 22644 / CIP 104116 / JCM 14847 / LMG 12228 / 1C / PRS 101 / PAO1</strain>
    </source>
</reference>
<gene>
    <name type="primary">hemL</name>
    <name type="ordered locus">PA3977</name>
</gene>
<evidence type="ECO:0000250" key="1"/>
<evidence type="ECO:0000305" key="2"/>
<evidence type="ECO:0007829" key="3">
    <source>
        <dbReference type="PDB" id="5I92"/>
    </source>
</evidence>
<proteinExistence type="evidence at protein level"/>
<feature type="chain" id="PRO_0000120433" description="Glutamate-1-semialdehyde 2,1-aminomutase">
    <location>
        <begin position="1"/>
        <end position="427"/>
    </location>
</feature>
<feature type="modified residue" description="N6-(pyridoxal phosphate)lysine" evidence="1">
    <location>
        <position position="265"/>
    </location>
</feature>
<feature type="sequence conflict" description="In Ref. 1; CAA57575." evidence="2" ref="1">
    <original>A</original>
    <variation>S</variation>
    <location>
        <position position="157"/>
    </location>
</feature>
<feature type="helix" evidence="3">
    <location>
        <begin position="3"/>
        <end position="11"/>
    </location>
</feature>
<feature type="turn" evidence="3">
    <location>
        <begin position="12"/>
        <end position="14"/>
    </location>
</feature>
<feature type="helix" evidence="3">
    <location>
        <begin position="16"/>
        <end position="18"/>
    </location>
</feature>
<feature type="helix" evidence="3">
    <location>
        <begin position="22"/>
        <end position="25"/>
    </location>
</feature>
<feature type="turn" evidence="3">
    <location>
        <begin position="27"/>
        <end position="29"/>
    </location>
</feature>
<feature type="strand" evidence="3">
    <location>
        <begin position="36"/>
        <end position="41"/>
    </location>
</feature>
<feature type="strand" evidence="3">
    <location>
        <begin position="43"/>
        <end position="46"/>
    </location>
</feature>
<feature type="strand" evidence="3">
    <location>
        <begin position="51"/>
        <end position="56"/>
    </location>
</feature>
<feature type="helix" evidence="3">
    <location>
        <begin position="57"/>
        <end position="59"/>
    </location>
</feature>
<feature type="helix" evidence="3">
    <location>
        <begin position="69"/>
        <end position="79"/>
    </location>
</feature>
<feature type="helix" evidence="3">
    <location>
        <begin position="90"/>
        <end position="102"/>
    </location>
</feature>
<feature type="strand" evidence="3">
    <location>
        <begin position="107"/>
        <end position="113"/>
    </location>
</feature>
<feature type="helix" evidence="3">
    <location>
        <begin position="115"/>
        <end position="130"/>
    </location>
</feature>
<feature type="strand" evidence="3">
    <location>
        <begin position="134"/>
        <end position="139"/>
    </location>
</feature>
<feature type="helix" evidence="3">
    <location>
        <begin position="147"/>
        <end position="149"/>
    </location>
</feature>
<feature type="strand" evidence="3">
    <location>
        <begin position="150"/>
        <end position="153"/>
    </location>
</feature>
<feature type="strand" evidence="3">
    <location>
        <begin position="161"/>
        <end position="165"/>
    </location>
</feature>
<feature type="helix" evidence="3">
    <location>
        <begin position="170"/>
        <end position="173"/>
    </location>
</feature>
<feature type="strand" evidence="3">
    <location>
        <begin position="176"/>
        <end position="180"/>
    </location>
</feature>
<feature type="helix" evidence="3">
    <location>
        <begin position="184"/>
        <end position="194"/>
    </location>
</feature>
<feature type="helix" evidence="3">
    <location>
        <begin position="195"/>
        <end position="197"/>
    </location>
</feature>
<feature type="strand" evidence="3">
    <location>
        <begin position="198"/>
        <end position="203"/>
    </location>
</feature>
<feature type="strand" evidence="3">
    <location>
        <begin position="205"/>
        <end position="207"/>
    </location>
</feature>
<feature type="strand" evidence="3">
    <location>
        <begin position="209"/>
        <end position="211"/>
    </location>
</feature>
<feature type="helix" evidence="3">
    <location>
        <begin position="219"/>
        <end position="230"/>
    </location>
</feature>
<feature type="strand" evidence="3">
    <location>
        <begin position="233"/>
        <end position="237"/>
    </location>
</feature>
<feature type="turn" evidence="3">
    <location>
        <begin position="239"/>
        <end position="244"/>
    </location>
</feature>
<feature type="helix" evidence="3">
    <location>
        <begin position="249"/>
        <end position="254"/>
    </location>
</feature>
<feature type="strand" evidence="3">
    <location>
        <begin position="259"/>
        <end position="264"/>
    </location>
</feature>
<feature type="helix" evidence="3">
    <location>
        <begin position="265"/>
        <end position="268"/>
    </location>
</feature>
<feature type="strand" evidence="3">
    <location>
        <begin position="274"/>
        <end position="278"/>
    </location>
</feature>
<feature type="helix" evidence="3">
    <location>
        <begin position="280"/>
        <end position="283"/>
    </location>
</feature>
<feature type="turn" evidence="3">
    <location>
        <begin position="287"/>
        <end position="289"/>
    </location>
</feature>
<feature type="strand" evidence="3">
    <location>
        <begin position="290"/>
        <end position="292"/>
    </location>
</feature>
<feature type="strand" evidence="3">
    <location>
        <begin position="295"/>
        <end position="297"/>
    </location>
</feature>
<feature type="helix" evidence="3">
    <location>
        <begin position="302"/>
        <end position="314"/>
    </location>
</feature>
<feature type="helix" evidence="3">
    <location>
        <begin position="320"/>
        <end position="341"/>
    </location>
</feature>
<feature type="strand" evidence="3">
    <location>
        <begin position="347"/>
        <end position="351"/>
    </location>
</feature>
<feature type="strand" evidence="3">
    <location>
        <begin position="354"/>
        <end position="358"/>
    </location>
</feature>
<feature type="helix" evidence="3">
    <location>
        <begin position="368"/>
        <end position="373"/>
    </location>
</feature>
<feature type="helix" evidence="3">
    <location>
        <begin position="376"/>
        <end position="388"/>
    </location>
</feature>
<feature type="helix" evidence="3">
    <location>
        <begin position="409"/>
        <end position="424"/>
    </location>
</feature>